<reference key="1">
    <citation type="journal article" date="2005" name="Nat. Biotechnol.">
        <title>The complete genome sequence of the meat-borne lactic acid bacterium Lactobacillus sakei 23K.</title>
        <authorList>
            <person name="Chaillou S."/>
            <person name="Champomier-Verges M.-C."/>
            <person name="Cornet M."/>
            <person name="Crutz-Le Coq A.-M."/>
            <person name="Dudez A.-M."/>
            <person name="Martin V."/>
            <person name="Beaufils S."/>
            <person name="Darbon-Rongere E."/>
            <person name="Bossy R."/>
            <person name="Loux V."/>
            <person name="Zagorec M."/>
        </authorList>
    </citation>
    <scope>NUCLEOTIDE SEQUENCE [LARGE SCALE GENOMIC DNA]</scope>
    <source>
        <strain>23K</strain>
    </source>
</reference>
<keyword id="KW-1185">Reference proteome</keyword>
<sequence length="113" mass="13137">MELAQNARMNSLFEFYGALLTAKQHSYLSLYYGDDFSLGEIAEEYQVSRQAVYDNIRRTEKILEGYEAKLHLFQNYEQQNASADALQKYIQAQYPNDQQLAKLLADLLNLTEQ</sequence>
<organism>
    <name type="scientific">Latilactobacillus sakei subsp. sakei (strain 23K)</name>
    <name type="common">Lactobacillus sakei subsp. sakei</name>
    <dbReference type="NCBI Taxonomy" id="314315"/>
    <lineage>
        <taxon>Bacteria</taxon>
        <taxon>Bacillati</taxon>
        <taxon>Bacillota</taxon>
        <taxon>Bacilli</taxon>
        <taxon>Lactobacillales</taxon>
        <taxon>Lactobacillaceae</taxon>
        <taxon>Latilactobacillus</taxon>
    </lineage>
</organism>
<proteinExistence type="inferred from homology"/>
<evidence type="ECO:0000255" key="1">
    <source>
        <dbReference type="HAMAP-Rule" id="MF_00245"/>
    </source>
</evidence>
<name>Y713_LATSS</name>
<gene>
    <name type="ordered locus">LCA_0713</name>
</gene>
<accession>Q38XR2</accession>
<protein>
    <recommendedName>
        <fullName evidence="1">UPF0122 protein LCA_0713</fullName>
    </recommendedName>
</protein>
<comment type="function">
    <text evidence="1">Might take part in the signal recognition particle (SRP) pathway. This is inferred from the conservation of its genetic proximity to ftsY/ffh. May be a regulatory protein.</text>
</comment>
<comment type="similarity">
    <text evidence="1">Belongs to the UPF0122 family.</text>
</comment>
<dbReference type="EMBL" id="CR936503">
    <property type="protein sequence ID" value="CAI55017.1"/>
    <property type="molecule type" value="Genomic_DNA"/>
</dbReference>
<dbReference type="RefSeq" id="WP_011374421.1">
    <property type="nucleotide sequence ID" value="NC_007576.1"/>
</dbReference>
<dbReference type="SMR" id="Q38XR2"/>
<dbReference type="STRING" id="314315.LCA_0713"/>
<dbReference type="KEGG" id="lsa:LCA_0713"/>
<dbReference type="eggNOG" id="COG2739">
    <property type="taxonomic scope" value="Bacteria"/>
</dbReference>
<dbReference type="HOGENOM" id="CLU_129218_1_0_9"/>
<dbReference type="OrthoDB" id="6392at2"/>
<dbReference type="Proteomes" id="UP000002707">
    <property type="component" value="Chromosome"/>
</dbReference>
<dbReference type="Gene3D" id="1.10.10.10">
    <property type="entry name" value="Winged helix-like DNA-binding domain superfamily/Winged helix DNA-binding domain"/>
    <property type="match status" value="1"/>
</dbReference>
<dbReference type="HAMAP" id="MF_00245">
    <property type="entry name" value="UPF0122"/>
    <property type="match status" value="1"/>
</dbReference>
<dbReference type="InterPro" id="IPR013324">
    <property type="entry name" value="RNA_pol_sigma_r3/r4-like"/>
</dbReference>
<dbReference type="InterPro" id="IPR007394">
    <property type="entry name" value="UPF0122"/>
</dbReference>
<dbReference type="InterPro" id="IPR054831">
    <property type="entry name" value="UPF0122_fam_protein"/>
</dbReference>
<dbReference type="InterPro" id="IPR036388">
    <property type="entry name" value="WH-like_DNA-bd_sf"/>
</dbReference>
<dbReference type="NCBIfam" id="NF001068">
    <property type="entry name" value="PRK00118.1-4"/>
    <property type="match status" value="1"/>
</dbReference>
<dbReference type="NCBIfam" id="NF001070">
    <property type="entry name" value="PRK00118.1-6"/>
    <property type="match status" value="1"/>
</dbReference>
<dbReference type="NCBIfam" id="NF045758">
    <property type="entry name" value="YlxM"/>
    <property type="match status" value="1"/>
</dbReference>
<dbReference type="PANTHER" id="PTHR40083">
    <property type="entry name" value="UPF0122 PROTEIN CBO2450/CLC_2298"/>
    <property type="match status" value="1"/>
</dbReference>
<dbReference type="PANTHER" id="PTHR40083:SF1">
    <property type="entry name" value="UPF0122 PROTEIN YLXM"/>
    <property type="match status" value="1"/>
</dbReference>
<dbReference type="Pfam" id="PF04297">
    <property type="entry name" value="UPF0122"/>
    <property type="match status" value="1"/>
</dbReference>
<dbReference type="SUPFAM" id="SSF88659">
    <property type="entry name" value="Sigma3 and sigma4 domains of RNA polymerase sigma factors"/>
    <property type="match status" value="1"/>
</dbReference>
<feature type="chain" id="PRO_1000012533" description="UPF0122 protein LCA_0713">
    <location>
        <begin position="1"/>
        <end position="113"/>
    </location>
</feature>